<evidence type="ECO:0000250" key="1"/>
<evidence type="ECO:0000250" key="2">
    <source>
        <dbReference type="UniProtKB" id="Q5XF90"/>
    </source>
</evidence>
<evidence type="ECO:0000255" key="3"/>
<evidence type="ECO:0000269" key="4">
    <source>
    </source>
</evidence>
<evidence type="ECO:0000269" key="5">
    <source>
    </source>
</evidence>
<evidence type="ECO:0000303" key="6">
    <source>
    </source>
</evidence>
<evidence type="ECO:0000303" key="7">
    <source>
    </source>
</evidence>
<evidence type="ECO:0000303" key="8">
    <source>
    </source>
</evidence>
<evidence type="ECO:0000303" key="9">
    <source>
    </source>
</evidence>
<evidence type="ECO:0000305" key="10"/>
<gene>
    <name type="primary">ATP13A4</name>
    <name type="ORF">UNQ3052/PRO9871</name>
</gene>
<comment type="catalytic activity">
    <reaction>
        <text>ATP + H2O = ADP + phosphate + H(+)</text>
        <dbReference type="Rhea" id="RHEA:13065"/>
        <dbReference type="ChEBI" id="CHEBI:15377"/>
        <dbReference type="ChEBI" id="CHEBI:15378"/>
        <dbReference type="ChEBI" id="CHEBI:30616"/>
        <dbReference type="ChEBI" id="CHEBI:43474"/>
        <dbReference type="ChEBI" id="CHEBI:456216"/>
    </reaction>
</comment>
<comment type="subcellular location">
    <subcellularLocation>
        <location evidence="2">Early endosome membrane</location>
        <topology evidence="3">Multi-pass membrane protein</topology>
    </subcellularLocation>
    <subcellularLocation>
        <location evidence="2">Late endosome membrane</location>
        <topology evidence="3">Multi-pass membrane protein</topology>
    </subcellularLocation>
    <subcellularLocation>
        <location evidence="2">Recycling endosome membrane</location>
        <topology evidence="3">Multi-pass membrane protein</topology>
    </subcellularLocation>
</comment>
<comment type="alternative products">
    <event type="alternative splicing"/>
    <isoform>
        <id>Q4VNC1-1</id>
        <name>1</name>
        <sequence type="displayed"/>
    </isoform>
    <isoform>
        <id>Q4VNC1-2</id>
        <name>2</name>
        <sequence type="described" ref="VSP_031261"/>
    </isoform>
    <isoform>
        <id>Q4VNC1-3</id>
        <name>3</name>
        <sequence type="described" ref="VSP_031259 VSP_031260"/>
    </isoform>
    <isoform>
        <id>Q4VNC1-4</id>
        <name>4</name>
        <sequence type="described" ref="VSP_031258"/>
    </isoform>
</comment>
<comment type="tissue specificity">
    <text evidence="4 5">Expressed in heart, placenta, liver, skeletal muscles, and pancreas. Lower levels of expression are also detected in brain, lung and kidney. Weakly expressed in the adult brain. Expression in fetal brain is higher than in adult brain, with levels similar to several other fetal tissues including spleen and skeletal muscle. In adult brain expressed at low levels in all tissues examined, including the temporal lobe and putamen (PubMed:15925480). Highly expressed in the respiratory and integumentary systems (PubMed:29505581).</text>
</comment>
<comment type="induction">
    <text evidence="4">Decreased by half in the SLI patient lymphoblasts.</text>
</comment>
<comment type="disease">
    <text evidence="4">A chromosomal aberration involving ATP13A4 is found in 2 patients with specific language impairment (SLI) disorders. Paracentric inversion inv(3)(q25;q29). The inversion produces a disruption of the protein.</text>
</comment>
<comment type="miscellaneous">
    <molecule>Isoform 2</molecule>
    <text evidence="10">Dubious isoform lacking mature mRNA evidence.</text>
</comment>
<comment type="similarity">
    <text evidence="10">Belongs to the cation transport ATPase (P-type) (TC 3.A.3) family. Type V subfamily.</text>
</comment>
<comment type="sequence caution" evidence="10">
    <conflict type="erroneous translation">
        <sequence resource="EMBL-CDS" id="CAC21667"/>
    </conflict>
    <text>Wrong choice of CDS.</text>
</comment>
<reference key="1">
    <citation type="journal article" date="2005" name="Genomics">
        <title>Characterization of a novel cation transporter ATPase gene (ATP13A4) interrupted by 3q25-q29 inversion in an individual with language delay.</title>
        <authorList>
            <person name="Kwasnicka-Crawford D.A."/>
            <person name="Carson A.R."/>
            <person name="Roberts W."/>
            <person name="Summers A.M."/>
            <person name="Rehnstrom K."/>
            <person name="Jarvela I."/>
            <person name="Scherer S.W."/>
        </authorList>
    </citation>
    <scope>NUCLEOTIDE SEQUENCE [MRNA] (ISOFORM 1)</scope>
    <scope>TISSUE SPECIFICITY</scope>
    <scope>INDUCTION</scope>
    <scope>CHROMOSOMAL REARRANGEMENT</scope>
    <scope>VARIANTS MET-181; ALA-353 AND ASP-646</scope>
</reference>
<reference key="2">
    <citation type="journal article" date="2003" name="Genome Res.">
        <title>The secreted protein discovery initiative (SPDI), a large-scale effort to identify novel human secreted and transmembrane proteins: a bioinformatics assessment.</title>
        <authorList>
            <person name="Clark H.F."/>
            <person name="Gurney A.L."/>
            <person name="Abaya E."/>
            <person name="Baker K."/>
            <person name="Baldwin D.T."/>
            <person name="Brush J."/>
            <person name="Chen J."/>
            <person name="Chow B."/>
            <person name="Chui C."/>
            <person name="Crowley C."/>
            <person name="Currell B."/>
            <person name="Deuel B."/>
            <person name="Dowd P."/>
            <person name="Eaton D."/>
            <person name="Foster J.S."/>
            <person name="Grimaldi C."/>
            <person name="Gu Q."/>
            <person name="Hass P.E."/>
            <person name="Heldens S."/>
            <person name="Huang A."/>
            <person name="Kim H.S."/>
            <person name="Klimowski L."/>
            <person name="Jin Y."/>
            <person name="Johnson S."/>
            <person name="Lee J."/>
            <person name="Lewis L."/>
            <person name="Liao D."/>
            <person name="Mark M.R."/>
            <person name="Robbie E."/>
            <person name="Sanchez C."/>
            <person name="Schoenfeld J."/>
            <person name="Seshagiri S."/>
            <person name="Simmons L."/>
            <person name="Singh J."/>
            <person name="Smith V."/>
            <person name="Stinson J."/>
            <person name="Vagts A."/>
            <person name="Vandlen R.L."/>
            <person name="Watanabe C."/>
            <person name="Wieand D."/>
            <person name="Woods K."/>
            <person name="Xie M.-H."/>
            <person name="Yansura D.G."/>
            <person name="Yi S."/>
            <person name="Yu G."/>
            <person name="Yuan J."/>
            <person name="Zhang M."/>
            <person name="Zhang Z."/>
            <person name="Goddard A.D."/>
            <person name="Wood W.I."/>
            <person name="Godowski P.J."/>
            <person name="Gray A.M."/>
        </authorList>
    </citation>
    <scope>NUCLEOTIDE SEQUENCE [LARGE SCALE MRNA] (ISOFORM 4)</scope>
</reference>
<reference key="3">
    <citation type="journal article" date="2004" name="Nat. Genet.">
        <title>Complete sequencing and characterization of 21,243 full-length human cDNAs.</title>
        <authorList>
            <person name="Ota T."/>
            <person name="Suzuki Y."/>
            <person name="Nishikawa T."/>
            <person name="Otsuki T."/>
            <person name="Sugiyama T."/>
            <person name="Irie R."/>
            <person name="Wakamatsu A."/>
            <person name="Hayashi K."/>
            <person name="Sato H."/>
            <person name="Nagai K."/>
            <person name="Kimura K."/>
            <person name="Makita H."/>
            <person name="Sekine M."/>
            <person name="Obayashi M."/>
            <person name="Nishi T."/>
            <person name="Shibahara T."/>
            <person name="Tanaka T."/>
            <person name="Ishii S."/>
            <person name="Yamamoto J."/>
            <person name="Saito K."/>
            <person name="Kawai Y."/>
            <person name="Isono Y."/>
            <person name="Nakamura Y."/>
            <person name="Nagahari K."/>
            <person name="Murakami K."/>
            <person name="Yasuda T."/>
            <person name="Iwayanagi T."/>
            <person name="Wagatsuma M."/>
            <person name="Shiratori A."/>
            <person name="Sudo H."/>
            <person name="Hosoiri T."/>
            <person name="Kaku Y."/>
            <person name="Kodaira H."/>
            <person name="Kondo H."/>
            <person name="Sugawara M."/>
            <person name="Takahashi M."/>
            <person name="Kanda K."/>
            <person name="Yokoi T."/>
            <person name="Furuya T."/>
            <person name="Kikkawa E."/>
            <person name="Omura Y."/>
            <person name="Abe K."/>
            <person name="Kamihara K."/>
            <person name="Katsuta N."/>
            <person name="Sato K."/>
            <person name="Tanikawa M."/>
            <person name="Yamazaki M."/>
            <person name="Ninomiya K."/>
            <person name="Ishibashi T."/>
            <person name="Yamashita H."/>
            <person name="Murakawa K."/>
            <person name="Fujimori K."/>
            <person name="Tanai H."/>
            <person name="Kimata M."/>
            <person name="Watanabe M."/>
            <person name="Hiraoka S."/>
            <person name="Chiba Y."/>
            <person name="Ishida S."/>
            <person name="Ono Y."/>
            <person name="Takiguchi S."/>
            <person name="Watanabe S."/>
            <person name="Yosida M."/>
            <person name="Hotuta T."/>
            <person name="Kusano J."/>
            <person name="Kanehori K."/>
            <person name="Takahashi-Fujii A."/>
            <person name="Hara H."/>
            <person name="Tanase T.-O."/>
            <person name="Nomura Y."/>
            <person name="Togiya S."/>
            <person name="Komai F."/>
            <person name="Hara R."/>
            <person name="Takeuchi K."/>
            <person name="Arita M."/>
            <person name="Imose N."/>
            <person name="Musashino K."/>
            <person name="Yuuki H."/>
            <person name="Oshima A."/>
            <person name="Sasaki N."/>
            <person name="Aotsuka S."/>
            <person name="Yoshikawa Y."/>
            <person name="Matsunawa H."/>
            <person name="Ichihara T."/>
            <person name="Shiohata N."/>
            <person name="Sano S."/>
            <person name="Moriya S."/>
            <person name="Momiyama H."/>
            <person name="Satoh N."/>
            <person name="Takami S."/>
            <person name="Terashima Y."/>
            <person name="Suzuki O."/>
            <person name="Nakagawa S."/>
            <person name="Senoh A."/>
            <person name="Mizoguchi H."/>
            <person name="Goto Y."/>
            <person name="Shimizu F."/>
            <person name="Wakebe H."/>
            <person name="Hishigaki H."/>
            <person name="Watanabe T."/>
            <person name="Sugiyama A."/>
            <person name="Takemoto M."/>
            <person name="Kawakami B."/>
            <person name="Yamazaki M."/>
            <person name="Watanabe K."/>
            <person name="Kumagai A."/>
            <person name="Itakura S."/>
            <person name="Fukuzumi Y."/>
            <person name="Fujimori Y."/>
            <person name="Komiyama M."/>
            <person name="Tashiro H."/>
            <person name="Tanigami A."/>
            <person name="Fujiwara T."/>
            <person name="Ono T."/>
            <person name="Yamada K."/>
            <person name="Fujii Y."/>
            <person name="Ozaki K."/>
            <person name="Hirao M."/>
            <person name="Ohmori Y."/>
            <person name="Kawabata A."/>
            <person name="Hikiji T."/>
            <person name="Kobatake N."/>
            <person name="Inagaki H."/>
            <person name="Ikema Y."/>
            <person name="Okamoto S."/>
            <person name="Okitani R."/>
            <person name="Kawakami T."/>
            <person name="Noguchi S."/>
            <person name="Itoh T."/>
            <person name="Shigeta K."/>
            <person name="Senba T."/>
            <person name="Matsumura K."/>
            <person name="Nakajima Y."/>
            <person name="Mizuno T."/>
            <person name="Morinaga M."/>
            <person name="Sasaki M."/>
            <person name="Togashi T."/>
            <person name="Oyama M."/>
            <person name="Hata H."/>
            <person name="Watanabe M."/>
            <person name="Komatsu T."/>
            <person name="Mizushima-Sugano J."/>
            <person name="Satoh T."/>
            <person name="Shirai Y."/>
            <person name="Takahashi Y."/>
            <person name="Nakagawa K."/>
            <person name="Okumura K."/>
            <person name="Nagase T."/>
            <person name="Nomura N."/>
            <person name="Kikuchi H."/>
            <person name="Masuho Y."/>
            <person name="Yamashita R."/>
            <person name="Nakai K."/>
            <person name="Yada T."/>
            <person name="Nakamura Y."/>
            <person name="Ohara O."/>
            <person name="Isogai T."/>
            <person name="Sugano S."/>
        </authorList>
    </citation>
    <scope>NUCLEOTIDE SEQUENCE [LARGE SCALE MRNA] (ISOFORM 2)</scope>
    <source>
        <tissue>Tongue</tissue>
    </source>
</reference>
<reference key="4">
    <citation type="journal article" date="2006" name="Nature">
        <title>The DNA sequence, annotation and analysis of human chromosome 3.</title>
        <authorList>
            <person name="Muzny D.M."/>
            <person name="Scherer S.E."/>
            <person name="Kaul R."/>
            <person name="Wang J."/>
            <person name="Yu J."/>
            <person name="Sudbrak R."/>
            <person name="Buhay C.J."/>
            <person name="Chen R."/>
            <person name="Cree A."/>
            <person name="Ding Y."/>
            <person name="Dugan-Rocha S."/>
            <person name="Gill R."/>
            <person name="Gunaratne P."/>
            <person name="Harris R.A."/>
            <person name="Hawes A.C."/>
            <person name="Hernandez J."/>
            <person name="Hodgson A.V."/>
            <person name="Hume J."/>
            <person name="Jackson A."/>
            <person name="Khan Z.M."/>
            <person name="Kovar-Smith C."/>
            <person name="Lewis L.R."/>
            <person name="Lozado R.J."/>
            <person name="Metzker M.L."/>
            <person name="Milosavljevic A."/>
            <person name="Miner G.R."/>
            <person name="Morgan M.B."/>
            <person name="Nazareth L.V."/>
            <person name="Scott G."/>
            <person name="Sodergren E."/>
            <person name="Song X.-Z."/>
            <person name="Steffen D."/>
            <person name="Wei S."/>
            <person name="Wheeler D.A."/>
            <person name="Wright M.W."/>
            <person name="Worley K.C."/>
            <person name="Yuan Y."/>
            <person name="Zhang Z."/>
            <person name="Adams C.Q."/>
            <person name="Ansari-Lari M.A."/>
            <person name="Ayele M."/>
            <person name="Brown M.J."/>
            <person name="Chen G."/>
            <person name="Chen Z."/>
            <person name="Clendenning J."/>
            <person name="Clerc-Blankenburg K.P."/>
            <person name="Chen R."/>
            <person name="Chen Z."/>
            <person name="Davis C."/>
            <person name="Delgado O."/>
            <person name="Dinh H.H."/>
            <person name="Dong W."/>
            <person name="Draper H."/>
            <person name="Ernst S."/>
            <person name="Fu G."/>
            <person name="Gonzalez-Garay M.L."/>
            <person name="Garcia D.K."/>
            <person name="Gillett W."/>
            <person name="Gu J."/>
            <person name="Hao B."/>
            <person name="Haugen E."/>
            <person name="Havlak P."/>
            <person name="He X."/>
            <person name="Hennig S."/>
            <person name="Hu S."/>
            <person name="Huang W."/>
            <person name="Jackson L.R."/>
            <person name="Jacob L.S."/>
            <person name="Kelly S.H."/>
            <person name="Kube M."/>
            <person name="Levy R."/>
            <person name="Li Z."/>
            <person name="Liu B."/>
            <person name="Liu J."/>
            <person name="Liu W."/>
            <person name="Lu J."/>
            <person name="Maheshwari M."/>
            <person name="Nguyen B.-V."/>
            <person name="Okwuonu G.O."/>
            <person name="Palmeiri A."/>
            <person name="Pasternak S."/>
            <person name="Perez L.M."/>
            <person name="Phelps K.A."/>
            <person name="Plopper F.J."/>
            <person name="Qiang B."/>
            <person name="Raymond C."/>
            <person name="Rodriguez R."/>
            <person name="Saenphimmachak C."/>
            <person name="Santibanez J."/>
            <person name="Shen H."/>
            <person name="Shen Y."/>
            <person name="Subramanian S."/>
            <person name="Tabor P.E."/>
            <person name="Verduzco D."/>
            <person name="Waldron L."/>
            <person name="Wang J."/>
            <person name="Wang J."/>
            <person name="Wang Q."/>
            <person name="Williams G.A."/>
            <person name="Wong G.K.-S."/>
            <person name="Yao Z."/>
            <person name="Zhang J."/>
            <person name="Zhang X."/>
            <person name="Zhao G."/>
            <person name="Zhou J."/>
            <person name="Zhou Y."/>
            <person name="Nelson D."/>
            <person name="Lehrach H."/>
            <person name="Reinhardt R."/>
            <person name="Naylor S.L."/>
            <person name="Yang H."/>
            <person name="Olson M."/>
            <person name="Weinstock G."/>
            <person name="Gibbs R.A."/>
        </authorList>
    </citation>
    <scope>NUCLEOTIDE SEQUENCE [LARGE SCALE GENOMIC DNA]</scope>
</reference>
<reference key="5">
    <citation type="journal article" date="2004" name="Genome Res.">
        <title>The status, quality, and expansion of the NIH full-length cDNA project: the Mammalian Gene Collection (MGC).</title>
        <authorList>
            <consortium name="The MGC Project Team"/>
        </authorList>
    </citation>
    <scope>NUCLEOTIDE SEQUENCE [LARGE SCALE MRNA] (ISOFORM 2)</scope>
    <source>
        <tissue>Brain</tissue>
    </source>
</reference>
<reference key="6">
    <citation type="journal article" date="2007" name="BMC Genomics">
        <title>The full-ORF clone resource of the German cDNA consortium.</title>
        <authorList>
            <person name="Bechtel S."/>
            <person name="Rosenfelder H."/>
            <person name="Duda A."/>
            <person name="Schmidt C.P."/>
            <person name="Ernst U."/>
            <person name="Wellenreuther R."/>
            <person name="Mehrle A."/>
            <person name="Schuster C."/>
            <person name="Bahr A."/>
            <person name="Bloecker H."/>
            <person name="Heubner D."/>
            <person name="Hoerlein A."/>
            <person name="Michel G."/>
            <person name="Wedler H."/>
            <person name="Koehrer K."/>
            <person name="Ottenwaelder B."/>
            <person name="Poustka A."/>
            <person name="Wiemann S."/>
            <person name="Schupp I."/>
        </authorList>
    </citation>
    <scope>NUCLEOTIDE SEQUENCE [LARGE SCALE MRNA] OF 287-1196 (ISOFORM 3)</scope>
    <source>
        <tissue>Amygdala</tissue>
    </source>
</reference>
<reference key="7">
    <citation type="journal article" date="2018" name="PLoS ONE">
        <title>Parkinson disease related ATP13A2 evolved early in animal evolution.</title>
        <authorList>
            <person name="Soerensen D.M."/>
            <person name="Holemans T."/>
            <person name="van Veen S."/>
            <person name="Martin S."/>
            <person name="Arslan T."/>
            <person name="Haagendahl I.W."/>
            <person name="Holen H.W."/>
            <person name="Hamouda N.N."/>
            <person name="Eggermont J."/>
            <person name="Palmgren M."/>
            <person name="Vangheluwe P."/>
        </authorList>
    </citation>
    <scope>TISSUE SPECIFICITY</scope>
</reference>
<accession>Q4VNC1</accession>
<accession>B7WPC7</accession>
<accession>Q6UY23</accession>
<accession>Q8N1Q9</accession>
<accession>Q9H043</accession>
<dbReference type="EC" id="7.2.2.-"/>
<dbReference type="EMBL" id="AY823162">
    <property type="protein sequence ID" value="AAX24102.1"/>
    <property type="molecule type" value="mRNA"/>
</dbReference>
<dbReference type="EMBL" id="AY358110">
    <property type="protein sequence ID" value="AAQ88477.1"/>
    <property type="molecule type" value="mRNA"/>
</dbReference>
<dbReference type="EMBL" id="AK095277">
    <property type="protein sequence ID" value="BAC04520.1"/>
    <property type="molecule type" value="mRNA"/>
</dbReference>
<dbReference type="EMBL" id="AC048351">
    <property type="status" value="NOT_ANNOTATED_CDS"/>
    <property type="molecule type" value="Genomic_DNA"/>
</dbReference>
<dbReference type="EMBL" id="AC092942">
    <property type="status" value="NOT_ANNOTATED_CDS"/>
    <property type="molecule type" value="Genomic_DNA"/>
</dbReference>
<dbReference type="EMBL" id="AC105057">
    <property type="status" value="NOT_ANNOTATED_CDS"/>
    <property type="molecule type" value="Genomic_DNA"/>
</dbReference>
<dbReference type="EMBL" id="BC101496">
    <property type="protein sequence ID" value="AAI01497.1"/>
    <property type="molecule type" value="mRNA"/>
</dbReference>
<dbReference type="EMBL" id="AL512736">
    <property type="protein sequence ID" value="CAC21667.2"/>
    <property type="status" value="ALT_SEQ"/>
    <property type="molecule type" value="mRNA"/>
</dbReference>
<dbReference type="CCDS" id="CCDS3304.2">
    <molecule id="Q4VNC1-1"/>
</dbReference>
<dbReference type="RefSeq" id="NP_115655.2">
    <molecule id="Q4VNC1-1"/>
    <property type="nucleotide sequence ID" value="NM_032279.4"/>
</dbReference>
<dbReference type="SMR" id="Q4VNC1"/>
<dbReference type="BioGRID" id="123970">
    <property type="interactions" value="1"/>
</dbReference>
<dbReference type="FunCoup" id="Q4VNC1">
    <property type="interactions" value="338"/>
</dbReference>
<dbReference type="IntAct" id="Q4VNC1">
    <property type="interactions" value="1"/>
</dbReference>
<dbReference type="STRING" id="9606.ENSP00000339182"/>
<dbReference type="TCDB" id="3.A.3.10.20">
    <property type="family name" value="the p-type atpase (p-atpase) superfamily"/>
</dbReference>
<dbReference type="iPTMnet" id="Q4VNC1"/>
<dbReference type="PhosphoSitePlus" id="Q4VNC1"/>
<dbReference type="BioMuta" id="ATP13A4"/>
<dbReference type="DMDM" id="296439435"/>
<dbReference type="jPOST" id="Q4VNC1"/>
<dbReference type="MassIVE" id="Q4VNC1"/>
<dbReference type="PaxDb" id="9606-ENSP00000339182"/>
<dbReference type="PeptideAtlas" id="Q4VNC1"/>
<dbReference type="ProteomicsDB" id="62311">
    <molecule id="Q4VNC1-1"/>
</dbReference>
<dbReference type="ProteomicsDB" id="62312">
    <molecule id="Q4VNC1-2"/>
</dbReference>
<dbReference type="ProteomicsDB" id="62313">
    <molecule id="Q4VNC1-3"/>
</dbReference>
<dbReference type="Antibodypedia" id="56173">
    <property type="antibodies" value="6 antibodies from 4 providers"/>
</dbReference>
<dbReference type="Ensembl" id="ENST00000295548.3">
    <molecule id="Q4VNC1-3"/>
    <property type="protein sequence ID" value="ENSP00000295548.3"/>
    <property type="gene ID" value="ENSG00000127249.15"/>
</dbReference>
<dbReference type="Ensembl" id="ENST00000342695.9">
    <molecule id="Q4VNC1-1"/>
    <property type="protein sequence ID" value="ENSP00000339182.4"/>
    <property type="gene ID" value="ENSG00000127249.15"/>
</dbReference>
<dbReference type="Ensembl" id="ENST00000400270.6">
    <molecule id="Q4VNC1-4"/>
    <property type="protein sequence ID" value="ENSP00000383129.2"/>
    <property type="gene ID" value="ENSG00000127249.15"/>
</dbReference>
<dbReference type="GeneID" id="84239"/>
<dbReference type="KEGG" id="hsa:84239"/>
<dbReference type="MANE-Select" id="ENST00000342695.9">
    <property type="protein sequence ID" value="ENSP00000339182.4"/>
    <property type="RefSeq nucleotide sequence ID" value="NM_032279.4"/>
    <property type="RefSeq protein sequence ID" value="NP_115655.2"/>
</dbReference>
<dbReference type="UCSC" id="uc003ftd.4">
    <molecule id="Q4VNC1-1"/>
    <property type="organism name" value="human"/>
</dbReference>
<dbReference type="AGR" id="HGNC:25422"/>
<dbReference type="CTD" id="84239"/>
<dbReference type="DisGeNET" id="84239"/>
<dbReference type="GeneCards" id="ATP13A4"/>
<dbReference type="HGNC" id="HGNC:25422">
    <property type="gene designation" value="ATP13A4"/>
</dbReference>
<dbReference type="HPA" id="ENSG00000127249">
    <property type="expression patterns" value="Tissue enhanced (epididymis, parathyroid gland, thyroid gland)"/>
</dbReference>
<dbReference type="MalaCards" id="ATP13A4"/>
<dbReference type="MIM" id="609556">
    <property type="type" value="gene"/>
</dbReference>
<dbReference type="neXtProt" id="NX_Q4VNC1"/>
<dbReference type="OpenTargets" id="ENSG00000127249"/>
<dbReference type="PharmGKB" id="PA134979581"/>
<dbReference type="VEuPathDB" id="HostDB:ENSG00000127249"/>
<dbReference type="eggNOG" id="KOG0208">
    <property type="taxonomic scope" value="Eukaryota"/>
</dbReference>
<dbReference type="GeneTree" id="ENSGT00940000159448"/>
<dbReference type="HOGENOM" id="CLU_1299363_0_0_1"/>
<dbReference type="InParanoid" id="Q4VNC1"/>
<dbReference type="OMA" id="TTWEMAV"/>
<dbReference type="OrthoDB" id="48943at2759"/>
<dbReference type="PAN-GO" id="Q4VNC1">
    <property type="GO annotations" value="5 GO annotations based on evolutionary models"/>
</dbReference>
<dbReference type="PhylomeDB" id="Q4VNC1"/>
<dbReference type="TreeFam" id="TF300331"/>
<dbReference type="PathwayCommons" id="Q4VNC1"/>
<dbReference type="Reactome" id="R-HSA-936837">
    <property type="pathway name" value="Ion transport by P-type ATPases"/>
</dbReference>
<dbReference type="SignaLink" id="Q4VNC1"/>
<dbReference type="BioGRID-ORCS" id="84239">
    <property type="hits" value="16 hits in 1146 CRISPR screens"/>
</dbReference>
<dbReference type="ChiTaRS" id="ATP13A4">
    <property type="organism name" value="human"/>
</dbReference>
<dbReference type="GenomeRNAi" id="84239"/>
<dbReference type="Pharos" id="Q4VNC1">
    <property type="development level" value="Tdark"/>
</dbReference>
<dbReference type="PRO" id="PR:Q4VNC1"/>
<dbReference type="Proteomes" id="UP000005640">
    <property type="component" value="Chromosome 3"/>
</dbReference>
<dbReference type="RNAct" id="Q4VNC1">
    <property type="molecule type" value="protein"/>
</dbReference>
<dbReference type="Bgee" id="ENSG00000127249">
    <property type="expression patterns" value="Expressed in pancreatic ductal cell and 157 other cell types or tissues"/>
</dbReference>
<dbReference type="ExpressionAtlas" id="Q4VNC1">
    <property type="expression patterns" value="baseline and differential"/>
</dbReference>
<dbReference type="GO" id="GO:0031901">
    <property type="term" value="C:early endosome membrane"/>
    <property type="evidence" value="ECO:0000250"/>
    <property type="project" value="UniProtKB"/>
</dbReference>
<dbReference type="GO" id="GO:0005789">
    <property type="term" value="C:endoplasmic reticulum membrane"/>
    <property type="evidence" value="ECO:0000318"/>
    <property type="project" value="GO_Central"/>
</dbReference>
<dbReference type="GO" id="GO:0031902">
    <property type="term" value="C:late endosome membrane"/>
    <property type="evidence" value="ECO:0000250"/>
    <property type="project" value="UniProtKB"/>
</dbReference>
<dbReference type="GO" id="GO:0005886">
    <property type="term" value="C:plasma membrane"/>
    <property type="evidence" value="ECO:0000304"/>
    <property type="project" value="Reactome"/>
</dbReference>
<dbReference type="GO" id="GO:0055038">
    <property type="term" value="C:recycling endosome membrane"/>
    <property type="evidence" value="ECO:0000250"/>
    <property type="project" value="UniProtKB"/>
</dbReference>
<dbReference type="GO" id="GO:0005524">
    <property type="term" value="F:ATP binding"/>
    <property type="evidence" value="ECO:0007669"/>
    <property type="project" value="UniProtKB-KW"/>
</dbReference>
<dbReference type="GO" id="GO:0016887">
    <property type="term" value="F:ATP hydrolysis activity"/>
    <property type="evidence" value="ECO:0007669"/>
    <property type="project" value="InterPro"/>
</dbReference>
<dbReference type="GO" id="GO:0019829">
    <property type="term" value="F:ATPase-coupled monoatomic cation transmembrane transporter activity"/>
    <property type="evidence" value="ECO:0000318"/>
    <property type="project" value="GO_Central"/>
</dbReference>
<dbReference type="GO" id="GO:0046872">
    <property type="term" value="F:metal ion binding"/>
    <property type="evidence" value="ECO:0007669"/>
    <property type="project" value="UniProtKB-KW"/>
</dbReference>
<dbReference type="GO" id="GO:0015662">
    <property type="term" value="F:P-type ion transporter activity"/>
    <property type="evidence" value="ECO:0007669"/>
    <property type="project" value="InterPro"/>
</dbReference>
<dbReference type="GO" id="GO:0015203">
    <property type="term" value="F:polyamine transmembrane transporter activity"/>
    <property type="evidence" value="ECO:0000318"/>
    <property type="project" value="GO_Central"/>
</dbReference>
<dbReference type="GO" id="GO:0006874">
    <property type="term" value="P:intracellular calcium ion homeostasis"/>
    <property type="evidence" value="ECO:0000318"/>
    <property type="project" value="GO_Central"/>
</dbReference>
<dbReference type="GO" id="GO:0034220">
    <property type="term" value="P:monoatomic ion transmembrane transport"/>
    <property type="evidence" value="ECO:0000304"/>
    <property type="project" value="Reactome"/>
</dbReference>
<dbReference type="GO" id="GO:1902047">
    <property type="term" value="P:polyamine transmembrane transport"/>
    <property type="evidence" value="ECO:0000318"/>
    <property type="project" value="GO_Central"/>
</dbReference>
<dbReference type="CDD" id="cd07542">
    <property type="entry name" value="P-type_ATPase_cation"/>
    <property type="match status" value="1"/>
</dbReference>
<dbReference type="FunFam" id="1.20.1110.10:FF:000023">
    <property type="entry name" value="Cation-transporting ATPase"/>
    <property type="match status" value="1"/>
</dbReference>
<dbReference type="FunFam" id="3.40.1110.10:FF:000028">
    <property type="entry name" value="Cation-transporting ATPase"/>
    <property type="match status" value="1"/>
</dbReference>
<dbReference type="FunFam" id="3.40.50.1000:FF:000075">
    <property type="entry name" value="Cation-transporting ATPase"/>
    <property type="match status" value="1"/>
</dbReference>
<dbReference type="Gene3D" id="3.40.1110.10">
    <property type="entry name" value="Calcium-transporting ATPase, cytoplasmic domain N"/>
    <property type="match status" value="1"/>
</dbReference>
<dbReference type="Gene3D" id="2.70.150.10">
    <property type="entry name" value="Calcium-transporting ATPase, cytoplasmic transduction domain A"/>
    <property type="match status" value="1"/>
</dbReference>
<dbReference type="Gene3D" id="1.20.1110.10">
    <property type="entry name" value="Calcium-transporting ATPase, transmembrane domain"/>
    <property type="match status" value="1"/>
</dbReference>
<dbReference type="Gene3D" id="3.40.50.1000">
    <property type="entry name" value="HAD superfamily/HAD-like"/>
    <property type="match status" value="2"/>
</dbReference>
<dbReference type="InterPro" id="IPR004014">
    <property type="entry name" value="ATPase_P-typ_cation-transptr_N"/>
</dbReference>
<dbReference type="InterPro" id="IPR023299">
    <property type="entry name" value="ATPase_P-typ_cyto_dom_N"/>
</dbReference>
<dbReference type="InterPro" id="IPR018303">
    <property type="entry name" value="ATPase_P-typ_P_site"/>
</dbReference>
<dbReference type="InterPro" id="IPR023298">
    <property type="entry name" value="ATPase_P-typ_TM_dom_sf"/>
</dbReference>
<dbReference type="InterPro" id="IPR008250">
    <property type="entry name" value="ATPase_P-typ_transduc_dom_A_sf"/>
</dbReference>
<dbReference type="InterPro" id="IPR036412">
    <property type="entry name" value="HAD-like_sf"/>
</dbReference>
<dbReference type="InterPro" id="IPR023214">
    <property type="entry name" value="HAD_sf"/>
</dbReference>
<dbReference type="InterPro" id="IPR006544">
    <property type="entry name" value="P-type_TPase_V"/>
</dbReference>
<dbReference type="InterPro" id="IPR047819">
    <property type="entry name" value="P5A-ATPase_N"/>
</dbReference>
<dbReference type="InterPro" id="IPR047821">
    <property type="entry name" value="P5B-type_ATPase"/>
</dbReference>
<dbReference type="InterPro" id="IPR001757">
    <property type="entry name" value="P_typ_ATPase"/>
</dbReference>
<dbReference type="InterPro" id="IPR044492">
    <property type="entry name" value="P_typ_ATPase_HD_dom"/>
</dbReference>
<dbReference type="NCBIfam" id="TIGR01494">
    <property type="entry name" value="ATPase_P-type"/>
    <property type="match status" value="3"/>
</dbReference>
<dbReference type="NCBIfam" id="TIGR01657">
    <property type="entry name" value="P-ATPase-V"/>
    <property type="match status" value="1"/>
</dbReference>
<dbReference type="PANTHER" id="PTHR45630:SF1">
    <property type="entry name" value="CATION-TRANSPORTING ATPASE 13A4-RELATED"/>
    <property type="match status" value="1"/>
</dbReference>
<dbReference type="PANTHER" id="PTHR45630">
    <property type="entry name" value="CATION-TRANSPORTING ATPASE-RELATED"/>
    <property type="match status" value="1"/>
</dbReference>
<dbReference type="Pfam" id="PF13246">
    <property type="entry name" value="Cation_ATPase"/>
    <property type="match status" value="1"/>
</dbReference>
<dbReference type="Pfam" id="PF00690">
    <property type="entry name" value="Cation_ATPase_N"/>
    <property type="match status" value="1"/>
</dbReference>
<dbReference type="Pfam" id="PF00122">
    <property type="entry name" value="E1-E2_ATPase"/>
    <property type="match status" value="1"/>
</dbReference>
<dbReference type="Pfam" id="PF12409">
    <property type="entry name" value="P5-ATPase"/>
    <property type="match status" value="1"/>
</dbReference>
<dbReference type="PRINTS" id="PR00119">
    <property type="entry name" value="CATATPASE"/>
</dbReference>
<dbReference type="PRINTS" id="PR00121">
    <property type="entry name" value="NAKATPASE"/>
</dbReference>
<dbReference type="SFLD" id="SFLDG00002">
    <property type="entry name" value="C1.7:_P-type_atpase_like"/>
    <property type="match status" value="1"/>
</dbReference>
<dbReference type="SFLD" id="SFLDF00027">
    <property type="entry name" value="p-type_atpase"/>
    <property type="match status" value="1"/>
</dbReference>
<dbReference type="SMART" id="SM00831">
    <property type="entry name" value="Cation_ATPase_N"/>
    <property type="match status" value="1"/>
</dbReference>
<dbReference type="SUPFAM" id="SSF81653">
    <property type="entry name" value="Calcium ATPase, transduction domain A"/>
    <property type="match status" value="1"/>
</dbReference>
<dbReference type="SUPFAM" id="SSF81665">
    <property type="entry name" value="Calcium ATPase, transmembrane domain M"/>
    <property type="match status" value="1"/>
</dbReference>
<dbReference type="SUPFAM" id="SSF56784">
    <property type="entry name" value="HAD-like"/>
    <property type="match status" value="1"/>
</dbReference>
<dbReference type="SUPFAM" id="SSF81660">
    <property type="entry name" value="Metal cation-transporting ATPase, ATP-binding domain N"/>
    <property type="match status" value="1"/>
</dbReference>
<dbReference type="PROSITE" id="PS00154">
    <property type="entry name" value="ATPASE_E1_E2"/>
    <property type="match status" value="1"/>
</dbReference>
<proteinExistence type="evidence at protein level"/>
<name>AT134_HUMAN</name>
<protein>
    <recommendedName>
        <fullName>Probable cation-transporting ATPase 13A4</fullName>
        <ecNumber>7.2.2.-</ecNumber>
    </recommendedName>
    <alternativeName>
        <fullName>P5-ATPase isoform 4</fullName>
    </alternativeName>
</protein>
<feature type="chain" id="PRO_0000318675" description="Probable cation-transporting ATPase 13A4">
    <location>
        <begin position="1"/>
        <end position="1196"/>
    </location>
</feature>
<feature type="topological domain" description="Cytoplasmic" evidence="2">
    <location>
        <begin position="1"/>
        <end position="31"/>
    </location>
</feature>
<feature type="intramembrane region" evidence="2">
    <location>
        <begin position="32"/>
        <end position="52"/>
    </location>
</feature>
<feature type="topological domain" description="Cytoplasmic" evidence="2">
    <location>
        <begin position="53"/>
        <end position="197"/>
    </location>
</feature>
<feature type="transmembrane region" description="Helical" evidence="3">
    <location>
        <begin position="198"/>
        <end position="218"/>
    </location>
</feature>
<feature type="topological domain" description="Lumenal" evidence="2">
    <location>
        <begin position="219"/>
        <end position="223"/>
    </location>
</feature>
<feature type="transmembrane region" description="Helical" evidence="3">
    <location>
        <begin position="224"/>
        <end position="244"/>
    </location>
</feature>
<feature type="topological domain" description="Cytoplasmic" evidence="2">
    <location>
        <begin position="245"/>
        <end position="400"/>
    </location>
</feature>
<feature type="transmembrane region" description="Helical" evidence="3">
    <location>
        <begin position="401"/>
        <end position="421"/>
    </location>
</feature>
<feature type="topological domain" description="Lumenal" evidence="2">
    <location>
        <begin position="422"/>
        <end position="436"/>
    </location>
</feature>
<feature type="transmembrane region" description="Helical" evidence="3">
    <location>
        <begin position="437"/>
        <end position="457"/>
    </location>
</feature>
<feature type="topological domain" description="Cytoplasmic" evidence="2">
    <location>
        <begin position="458"/>
        <end position="900"/>
    </location>
</feature>
<feature type="transmembrane region" description="Helical" evidence="3">
    <location>
        <begin position="901"/>
        <end position="921"/>
    </location>
</feature>
<feature type="topological domain" description="Lumenal" evidence="2">
    <location>
        <begin position="922"/>
        <end position="932"/>
    </location>
</feature>
<feature type="transmembrane region" description="Helical" evidence="3">
    <location>
        <begin position="933"/>
        <end position="953"/>
    </location>
</feature>
<feature type="topological domain" description="Cytoplasmic" evidence="2">
    <location>
        <begin position="954"/>
        <end position="972"/>
    </location>
</feature>
<feature type="transmembrane region" description="Helical" evidence="3">
    <location>
        <begin position="973"/>
        <end position="993"/>
    </location>
</feature>
<feature type="topological domain" description="Lumenal" evidence="2">
    <location>
        <begin position="994"/>
        <end position="1035"/>
    </location>
</feature>
<feature type="transmembrane region" description="Helical" evidence="3">
    <location>
        <begin position="1036"/>
        <end position="1056"/>
    </location>
</feature>
<feature type="topological domain" description="Cytoplasmic" evidence="2">
    <location>
        <begin position="1057"/>
        <end position="1070"/>
    </location>
</feature>
<feature type="transmembrane region" description="Helical" evidence="3">
    <location>
        <begin position="1071"/>
        <end position="1091"/>
    </location>
</feature>
<feature type="topological domain" description="Lumenal" evidence="2">
    <location>
        <begin position="1092"/>
        <end position="1109"/>
    </location>
</feature>
<feature type="transmembrane region" description="Helical" evidence="3">
    <location>
        <begin position="1110"/>
        <end position="1130"/>
    </location>
</feature>
<feature type="topological domain" description="Cytoplasmic" evidence="2">
    <location>
        <begin position="1131"/>
        <end position="1196"/>
    </location>
</feature>
<feature type="active site" description="4-aspartylphosphate intermediate" evidence="1">
    <location>
        <position position="486"/>
    </location>
</feature>
<feature type="binding site" evidence="1">
    <location>
        <position position="848"/>
    </location>
    <ligand>
        <name>Mg(2+)</name>
        <dbReference type="ChEBI" id="CHEBI:18420"/>
    </ligand>
</feature>
<feature type="binding site" evidence="1">
    <location>
        <position position="852"/>
    </location>
    <ligand>
        <name>Mg(2+)</name>
        <dbReference type="ChEBI" id="CHEBI:18420"/>
    </ligand>
</feature>
<feature type="splice variant" id="VSP_031258" description="In isoform 4." evidence="6">
    <location>
        <begin position="1"/>
        <end position="984"/>
    </location>
</feature>
<feature type="splice variant" id="VSP_031259" description="In isoform 3." evidence="9">
    <original>EMAFSGDDFHIKGVPAHA</original>
    <variation>VSLCSSENLRSFFNARAT</variation>
    <location>
        <begin position="559"/>
        <end position="576"/>
    </location>
</feature>
<feature type="splice variant" id="VSP_031260" description="In isoform 3." evidence="9">
    <location>
        <begin position="577"/>
        <end position="1196"/>
    </location>
</feature>
<feature type="splice variant" id="VSP_031261" description="In isoform 2." evidence="7 8">
    <location>
        <begin position="841"/>
        <end position="1196"/>
    </location>
</feature>
<feature type="sequence variant" id="VAR_038849" description="In dbSNP:rs6788448." evidence="4">
    <original>I</original>
    <variation>M</variation>
    <location>
        <position position="181"/>
    </location>
</feature>
<feature type="sequence variant" id="VAR_038850" evidence="4">
    <original>V</original>
    <variation>A</variation>
    <location>
        <position position="353"/>
    </location>
</feature>
<feature type="sequence variant" id="VAR_038851" description="In dbSNP:rs35424709." evidence="4">
    <original>E</original>
    <variation>D</variation>
    <location>
        <position position="646"/>
    </location>
</feature>
<feature type="sequence conflict" description="In Ref. 3; BAC04520 and 5; AAI01497." evidence="10" ref="3 5">
    <original>D</original>
    <variation>E</variation>
    <location>
        <position position="840"/>
    </location>
</feature>
<feature type="sequence conflict" description="In Ref. 1; AAX24102." evidence="10" ref="1">
    <original>V</original>
    <variation>A</variation>
    <location>
        <position position="975"/>
    </location>
</feature>
<organism>
    <name type="scientific">Homo sapiens</name>
    <name type="common">Human</name>
    <dbReference type="NCBI Taxonomy" id="9606"/>
    <lineage>
        <taxon>Eukaryota</taxon>
        <taxon>Metazoa</taxon>
        <taxon>Chordata</taxon>
        <taxon>Craniata</taxon>
        <taxon>Vertebrata</taxon>
        <taxon>Euteleostomi</taxon>
        <taxon>Mammalia</taxon>
        <taxon>Eutheria</taxon>
        <taxon>Euarchontoglires</taxon>
        <taxon>Primates</taxon>
        <taxon>Haplorrhini</taxon>
        <taxon>Catarrhini</taxon>
        <taxon>Hominidae</taxon>
        <taxon>Homo</taxon>
    </lineage>
</organism>
<sequence>MGHFEKGQHALLNEGEENEMEIFGYRTQGCRKSLCLAGSIFSFGILPLVFYWRPAWHVWAHCVPCSLQEADTVLLRTTDEFQIYSWKKVIWIYLSALNSAFGLTPDHPLMTDEEYIINRAIRKPDLKVRCIKVQKIRYVWNYLEGQFQKIGSLEDWLSSAKIHQKFGSGLTREEQEIRRLICGPNTIDVEVTPIWKLLIKEVLNPFYIFQLFSVCLWFSEDYKEYAFAIIIMSIISISLTVYDLREQSVKLHHLVESHNSITVSVCGRKAGVQELESRVLVPGDLLILTGNKVLMPCDAVLIEGSCVVDEGMLTGESIPVTKTPLPKMDSSVPWKTQSEADYKRHVLFCGTEVIQAKAACSGTVRAVVLQTGFNTAKGDLVRSILYPKPVNFQLYRDAIRFLLCLVGTATIGMIYTLCVYVLSGEPPEEVVRKALDVITIAVPPALPAALTTGIIYAQRRLKKRGIFCISPQRINVCGQLNLVCFDKTGTLTRDGLDLWGVVSCDRNGFQEVHSFASGQALPWGPLCAAMASCHSLILLDGTIQGDPLDLKMFEATTWEMAFSGDDFHIKGVPAHAMVVKPCRTASQVPVEGIAILHQFPFSSALQRMTVIVQEMGGDRLAFMKGAPERVASFCQPETVPTSFVSELQIYTTQGFRVIALAYKKLENDHHATTLTRETVESDLIFLGLLILENRLKEETKPVLEELISARIRTVMITGDNLQTAITVARKSGMVSESQKVILIEANETTGSSSASISWTLVEEKKHIMYGNQDNYINIRDEVSDKGREGSYHFALTGKSFHVISQHFSSLLPKILINGTIFARMSPGQKSSLVEEFQKLDYFVGMCGDGANDCGALKMAHVGISLSEQEASVASPFTSKTPNIECVPHLIKEGRAALVTSFCMFKYMALYSMIQYVGVLLLYWETNSLSNYQFLFQDLAITTLIGVTMNLNGAYPKLVPFRPAGRLISPPLLLSVIFNILLSLAMHIAGFILVQRQPWYSVEIHSACTVQNESISELTMSPTAPEKMESNSTFTSFENTTVWFLGTINCITVALVFSKGKPFRQPTYTNYIFVLVLIIQLGVCLFILFADIPELYRRLDLLCTPVLWRASIVIMLSLNFIVSLVAEEAVIENRALWMMIKRCFGYQSKSQYRIWQRDLANDPSWPPLNQTSHSDMPECGRGVSYSNPVFESNEEQL</sequence>
<keyword id="KW-0025">Alternative splicing</keyword>
<keyword id="KW-0067">ATP-binding</keyword>
<keyword id="KW-0160">Chromosomal rearrangement</keyword>
<keyword id="KW-0967">Endosome</keyword>
<keyword id="KW-0460">Magnesium</keyword>
<keyword id="KW-0472">Membrane</keyword>
<keyword id="KW-0479">Metal-binding</keyword>
<keyword id="KW-0547">Nucleotide-binding</keyword>
<keyword id="KW-1267">Proteomics identification</keyword>
<keyword id="KW-1185">Reference proteome</keyword>
<keyword id="KW-1278">Translocase</keyword>
<keyword id="KW-0812">Transmembrane</keyword>
<keyword id="KW-1133">Transmembrane helix</keyword>